<organism>
    <name type="scientific">Sphingopyxis alaskensis (strain DSM 13593 / LMG 18877 / RB2256)</name>
    <name type="common">Sphingomonas alaskensis</name>
    <dbReference type="NCBI Taxonomy" id="317655"/>
    <lineage>
        <taxon>Bacteria</taxon>
        <taxon>Pseudomonadati</taxon>
        <taxon>Pseudomonadota</taxon>
        <taxon>Alphaproteobacteria</taxon>
        <taxon>Sphingomonadales</taxon>
        <taxon>Sphingomonadaceae</taxon>
        <taxon>Sphingopyxis</taxon>
    </lineage>
</organism>
<sequence>MKSDSPKTFHVKSFGCQMNVYDGERMAEMLGAEGYVPAADGADADLVVLNTCHIREKAAEKVYSDIGRLKRDDGSTPTIAVAGCVAQAEGAEIARRAPSVDVVVGPQAYHRLPELIARAERGEKAIDLDMPAESKFGALPKRSGNQRPTAFLTVQEGCDKFCTYCVVPYTRGAEISRPFADLIAEARALVAGGVREITLLGQNVNAWIGEDAKGRAIGLDGLIRELAKEDGLERIRYTTSHPNDMTDGLIVAHGEVDKLMPFLHLPVQAGSDRILAAMNRSHSVESYLKVIERVREARPDIAISGDFIVGFPGESEADFAATLDIVRATRYAMAYSFKYSRRPGTPAATMDDQIDEAVMNERLQRLQALLNEQQQAFNEATVGRTTRLLLERKGKREGQLIGKSPWLQSVHVTAPGLAIGDMIDVRITSAGPNSLGAEPLMAIA</sequence>
<name>MIAB_SPHAL</name>
<evidence type="ECO:0000255" key="1">
    <source>
        <dbReference type="HAMAP-Rule" id="MF_01864"/>
    </source>
</evidence>
<evidence type="ECO:0000255" key="2">
    <source>
        <dbReference type="PROSITE-ProRule" id="PRU01266"/>
    </source>
</evidence>
<protein>
    <recommendedName>
        <fullName evidence="1">tRNA-2-methylthio-N(6)-dimethylallyladenosine synthase</fullName>
        <ecNumber evidence="1">2.8.4.3</ecNumber>
    </recommendedName>
    <alternativeName>
        <fullName evidence="1">(Dimethylallyl)adenosine tRNA methylthiotransferase MiaB</fullName>
    </alternativeName>
    <alternativeName>
        <fullName evidence="1">tRNA-i(6)A37 methylthiotransferase</fullName>
    </alternativeName>
</protein>
<feature type="chain" id="PRO_0000374563" description="tRNA-2-methylthio-N(6)-dimethylallyladenosine synthase">
    <location>
        <begin position="1"/>
        <end position="444"/>
    </location>
</feature>
<feature type="domain" description="MTTase N-terminal" evidence="1">
    <location>
        <begin position="7"/>
        <end position="121"/>
    </location>
</feature>
<feature type="domain" description="Radical SAM core" evidence="2">
    <location>
        <begin position="144"/>
        <end position="376"/>
    </location>
</feature>
<feature type="domain" description="TRAM" evidence="1">
    <location>
        <begin position="379"/>
        <end position="441"/>
    </location>
</feature>
<feature type="binding site" evidence="1">
    <location>
        <position position="16"/>
    </location>
    <ligand>
        <name>[4Fe-4S] cluster</name>
        <dbReference type="ChEBI" id="CHEBI:49883"/>
        <label>1</label>
    </ligand>
</feature>
<feature type="binding site" evidence="1">
    <location>
        <position position="52"/>
    </location>
    <ligand>
        <name>[4Fe-4S] cluster</name>
        <dbReference type="ChEBI" id="CHEBI:49883"/>
        <label>1</label>
    </ligand>
</feature>
<feature type="binding site" evidence="1">
    <location>
        <position position="84"/>
    </location>
    <ligand>
        <name>[4Fe-4S] cluster</name>
        <dbReference type="ChEBI" id="CHEBI:49883"/>
        <label>1</label>
    </ligand>
</feature>
<feature type="binding site" evidence="1">
    <location>
        <position position="158"/>
    </location>
    <ligand>
        <name>[4Fe-4S] cluster</name>
        <dbReference type="ChEBI" id="CHEBI:49883"/>
        <label>2</label>
        <note>4Fe-4S-S-AdoMet</note>
    </ligand>
</feature>
<feature type="binding site" evidence="1">
    <location>
        <position position="162"/>
    </location>
    <ligand>
        <name>[4Fe-4S] cluster</name>
        <dbReference type="ChEBI" id="CHEBI:49883"/>
        <label>2</label>
        <note>4Fe-4S-S-AdoMet</note>
    </ligand>
</feature>
<feature type="binding site" evidence="1">
    <location>
        <position position="165"/>
    </location>
    <ligand>
        <name>[4Fe-4S] cluster</name>
        <dbReference type="ChEBI" id="CHEBI:49883"/>
        <label>2</label>
        <note>4Fe-4S-S-AdoMet</note>
    </ligand>
</feature>
<comment type="function">
    <text evidence="1">Catalyzes the methylthiolation of N6-(dimethylallyl)adenosine (i(6)A), leading to the formation of 2-methylthio-N6-(dimethylallyl)adenosine (ms(2)i(6)A) at position 37 in tRNAs that read codons beginning with uridine.</text>
</comment>
<comment type="catalytic activity">
    <reaction evidence="1">
        <text>N(6)-dimethylallyladenosine(37) in tRNA + (sulfur carrier)-SH + AH2 + 2 S-adenosyl-L-methionine = 2-methylsulfanyl-N(6)-dimethylallyladenosine(37) in tRNA + (sulfur carrier)-H + 5'-deoxyadenosine + L-methionine + A + S-adenosyl-L-homocysteine + 2 H(+)</text>
        <dbReference type="Rhea" id="RHEA:37067"/>
        <dbReference type="Rhea" id="RHEA-COMP:10375"/>
        <dbReference type="Rhea" id="RHEA-COMP:10376"/>
        <dbReference type="Rhea" id="RHEA-COMP:14737"/>
        <dbReference type="Rhea" id="RHEA-COMP:14739"/>
        <dbReference type="ChEBI" id="CHEBI:13193"/>
        <dbReference type="ChEBI" id="CHEBI:15378"/>
        <dbReference type="ChEBI" id="CHEBI:17319"/>
        <dbReference type="ChEBI" id="CHEBI:17499"/>
        <dbReference type="ChEBI" id="CHEBI:29917"/>
        <dbReference type="ChEBI" id="CHEBI:57844"/>
        <dbReference type="ChEBI" id="CHEBI:57856"/>
        <dbReference type="ChEBI" id="CHEBI:59789"/>
        <dbReference type="ChEBI" id="CHEBI:64428"/>
        <dbReference type="ChEBI" id="CHEBI:74415"/>
        <dbReference type="ChEBI" id="CHEBI:74417"/>
        <dbReference type="EC" id="2.8.4.3"/>
    </reaction>
</comment>
<comment type="cofactor">
    <cofactor evidence="1">
        <name>[4Fe-4S] cluster</name>
        <dbReference type="ChEBI" id="CHEBI:49883"/>
    </cofactor>
    <text evidence="1">Binds 2 [4Fe-4S] clusters. One cluster is coordinated with 3 cysteines and an exchangeable S-adenosyl-L-methionine.</text>
</comment>
<comment type="subunit">
    <text evidence="1">Monomer.</text>
</comment>
<comment type="subcellular location">
    <subcellularLocation>
        <location evidence="1">Cytoplasm</location>
    </subcellularLocation>
</comment>
<comment type="similarity">
    <text evidence="1">Belongs to the methylthiotransferase family. MiaB subfamily.</text>
</comment>
<keyword id="KW-0004">4Fe-4S</keyword>
<keyword id="KW-0963">Cytoplasm</keyword>
<keyword id="KW-0408">Iron</keyword>
<keyword id="KW-0411">Iron-sulfur</keyword>
<keyword id="KW-0479">Metal-binding</keyword>
<keyword id="KW-1185">Reference proteome</keyword>
<keyword id="KW-0949">S-adenosyl-L-methionine</keyword>
<keyword id="KW-0808">Transferase</keyword>
<keyword id="KW-0819">tRNA processing</keyword>
<dbReference type="EC" id="2.8.4.3" evidence="1"/>
<dbReference type="EMBL" id="CP000356">
    <property type="protein sequence ID" value="ABF53773.1"/>
    <property type="molecule type" value="Genomic_DNA"/>
</dbReference>
<dbReference type="RefSeq" id="WP_011542349.1">
    <property type="nucleotide sequence ID" value="NC_008048.1"/>
</dbReference>
<dbReference type="SMR" id="Q1GRE9"/>
<dbReference type="STRING" id="317655.Sala_2064"/>
<dbReference type="KEGG" id="sal:Sala_2064"/>
<dbReference type="eggNOG" id="COG0621">
    <property type="taxonomic scope" value="Bacteria"/>
</dbReference>
<dbReference type="HOGENOM" id="CLU_018697_2_0_5"/>
<dbReference type="OrthoDB" id="9805215at2"/>
<dbReference type="Proteomes" id="UP000006578">
    <property type="component" value="Chromosome"/>
</dbReference>
<dbReference type="GO" id="GO:0005829">
    <property type="term" value="C:cytosol"/>
    <property type="evidence" value="ECO:0007669"/>
    <property type="project" value="TreeGrafter"/>
</dbReference>
<dbReference type="GO" id="GO:0051539">
    <property type="term" value="F:4 iron, 4 sulfur cluster binding"/>
    <property type="evidence" value="ECO:0007669"/>
    <property type="project" value="UniProtKB-UniRule"/>
</dbReference>
<dbReference type="GO" id="GO:0046872">
    <property type="term" value="F:metal ion binding"/>
    <property type="evidence" value="ECO:0007669"/>
    <property type="project" value="UniProtKB-KW"/>
</dbReference>
<dbReference type="GO" id="GO:0035597">
    <property type="term" value="F:N6-isopentenyladenosine methylthiotransferase activity"/>
    <property type="evidence" value="ECO:0007669"/>
    <property type="project" value="TreeGrafter"/>
</dbReference>
<dbReference type="CDD" id="cd01335">
    <property type="entry name" value="Radical_SAM"/>
    <property type="match status" value="1"/>
</dbReference>
<dbReference type="FunFam" id="3.40.50.12160:FF:000003">
    <property type="entry name" value="CDK5 regulatory subunit-associated protein 1"/>
    <property type="match status" value="1"/>
</dbReference>
<dbReference type="FunFam" id="3.80.30.20:FF:000001">
    <property type="entry name" value="tRNA-2-methylthio-N(6)-dimethylallyladenosine synthase 2"/>
    <property type="match status" value="1"/>
</dbReference>
<dbReference type="Gene3D" id="3.40.50.12160">
    <property type="entry name" value="Methylthiotransferase, N-terminal domain"/>
    <property type="match status" value="1"/>
</dbReference>
<dbReference type="Gene3D" id="3.80.30.20">
    <property type="entry name" value="tm_1862 like domain"/>
    <property type="match status" value="1"/>
</dbReference>
<dbReference type="HAMAP" id="MF_01864">
    <property type="entry name" value="tRNA_metthiotr_MiaB"/>
    <property type="match status" value="1"/>
</dbReference>
<dbReference type="InterPro" id="IPR006638">
    <property type="entry name" value="Elp3/MiaA/NifB-like_rSAM"/>
</dbReference>
<dbReference type="InterPro" id="IPR005839">
    <property type="entry name" value="Methylthiotransferase"/>
</dbReference>
<dbReference type="InterPro" id="IPR020612">
    <property type="entry name" value="Methylthiotransferase_CS"/>
</dbReference>
<dbReference type="InterPro" id="IPR013848">
    <property type="entry name" value="Methylthiotransferase_N"/>
</dbReference>
<dbReference type="InterPro" id="IPR038135">
    <property type="entry name" value="Methylthiotransferase_N_sf"/>
</dbReference>
<dbReference type="InterPro" id="IPR006463">
    <property type="entry name" value="MiaB_methiolase"/>
</dbReference>
<dbReference type="InterPro" id="IPR007197">
    <property type="entry name" value="rSAM"/>
</dbReference>
<dbReference type="InterPro" id="IPR023404">
    <property type="entry name" value="rSAM_horseshoe"/>
</dbReference>
<dbReference type="InterPro" id="IPR002792">
    <property type="entry name" value="TRAM_dom"/>
</dbReference>
<dbReference type="NCBIfam" id="TIGR01574">
    <property type="entry name" value="miaB-methiolase"/>
    <property type="match status" value="1"/>
</dbReference>
<dbReference type="NCBIfam" id="TIGR00089">
    <property type="entry name" value="MiaB/RimO family radical SAM methylthiotransferase"/>
    <property type="match status" value="1"/>
</dbReference>
<dbReference type="PANTHER" id="PTHR43020">
    <property type="entry name" value="CDK5 REGULATORY SUBUNIT-ASSOCIATED PROTEIN 1"/>
    <property type="match status" value="1"/>
</dbReference>
<dbReference type="PANTHER" id="PTHR43020:SF2">
    <property type="entry name" value="MITOCHONDRIAL TRNA METHYLTHIOTRANSFERASE CDK5RAP1"/>
    <property type="match status" value="1"/>
</dbReference>
<dbReference type="Pfam" id="PF04055">
    <property type="entry name" value="Radical_SAM"/>
    <property type="match status" value="1"/>
</dbReference>
<dbReference type="Pfam" id="PF01938">
    <property type="entry name" value="TRAM"/>
    <property type="match status" value="1"/>
</dbReference>
<dbReference type="Pfam" id="PF00919">
    <property type="entry name" value="UPF0004"/>
    <property type="match status" value="1"/>
</dbReference>
<dbReference type="SFLD" id="SFLDF00273">
    <property type="entry name" value="(dimethylallyl)adenosine_tRNA"/>
    <property type="match status" value="1"/>
</dbReference>
<dbReference type="SFLD" id="SFLDG01082">
    <property type="entry name" value="B12-binding_domain_containing"/>
    <property type="match status" value="1"/>
</dbReference>
<dbReference type="SFLD" id="SFLDS00029">
    <property type="entry name" value="Radical_SAM"/>
    <property type="match status" value="1"/>
</dbReference>
<dbReference type="SMART" id="SM00729">
    <property type="entry name" value="Elp3"/>
    <property type="match status" value="1"/>
</dbReference>
<dbReference type="SUPFAM" id="SSF102114">
    <property type="entry name" value="Radical SAM enzymes"/>
    <property type="match status" value="1"/>
</dbReference>
<dbReference type="PROSITE" id="PS51449">
    <property type="entry name" value="MTTASE_N"/>
    <property type="match status" value="1"/>
</dbReference>
<dbReference type="PROSITE" id="PS01278">
    <property type="entry name" value="MTTASE_RADICAL"/>
    <property type="match status" value="1"/>
</dbReference>
<dbReference type="PROSITE" id="PS51918">
    <property type="entry name" value="RADICAL_SAM"/>
    <property type="match status" value="1"/>
</dbReference>
<dbReference type="PROSITE" id="PS50926">
    <property type="entry name" value="TRAM"/>
    <property type="match status" value="1"/>
</dbReference>
<proteinExistence type="inferred from homology"/>
<gene>
    <name evidence="1" type="primary">miaB</name>
    <name type="ordered locus">Sala_2064</name>
</gene>
<reference key="1">
    <citation type="journal article" date="2009" name="Proc. Natl. Acad. Sci. U.S.A.">
        <title>The genomic basis of trophic strategy in marine bacteria.</title>
        <authorList>
            <person name="Lauro F.M."/>
            <person name="McDougald D."/>
            <person name="Thomas T."/>
            <person name="Williams T.J."/>
            <person name="Egan S."/>
            <person name="Rice S."/>
            <person name="DeMaere M.Z."/>
            <person name="Ting L."/>
            <person name="Ertan H."/>
            <person name="Johnson J."/>
            <person name="Ferriera S."/>
            <person name="Lapidus A."/>
            <person name="Anderson I."/>
            <person name="Kyrpides N."/>
            <person name="Munk A.C."/>
            <person name="Detter C."/>
            <person name="Han C.S."/>
            <person name="Brown M.V."/>
            <person name="Robb F.T."/>
            <person name="Kjelleberg S."/>
            <person name="Cavicchioli R."/>
        </authorList>
    </citation>
    <scope>NUCLEOTIDE SEQUENCE [LARGE SCALE GENOMIC DNA]</scope>
    <source>
        <strain>DSM 13593 / LMG 18877 / RB2256</strain>
    </source>
</reference>
<accession>Q1GRE9</accession>